<comment type="function">
    <text evidence="1">Catalyzes the anti-1,4-elimination of the C-3 phosphate and the C-6 proR hydrogen from 5-enolpyruvylshikimate-3-phosphate (EPSP) to yield chorismate, which is the branch point compound that serves as the starting substrate for the three terminal pathways of aromatic amino acid biosynthesis. This reaction introduces a second double bond into the aromatic ring system.</text>
</comment>
<comment type="catalytic activity">
    <reaction evidence="1">
        <text>5-O-(1-carboxyvinyl)-3-phosphoshikimate = chorismate + phosphate</text>
        <dbReference type="Rhea" id="RHEA:21020"/>
        <dbReference type="ChEBI" id="CHEBI:29748"/>
        <dbReference type="ChEBI" id="CHEBI:43474"/>
        <dbReference type="ChEBI" id="CHEBI:57701"/>
        <dbReference type="EC" id="4.2.3.5"/>
    </reaction>
</comment>
<comment type="cofactor">
    <cofactor evidence="1">
        <name>FMNH2</name>
        <dbReference type="ChEBI" id="CHEBI:57618"/>
    </cofactor>
    <text evidence="1">Reduced FMN (FMNH(2)).</text>
</comment>
<comment type="pathway">
    <text evidence="1">Metabolic intermediate biosynthesis; chorismate biosynthesis; chorismate from D-erythrose 4-phosphate and phosphoenolpyruvate: step 7/7.</text>
</comment>
<comment type="subunit">
    <text evidence="1">Homotetramer.</text>
</comment>
<comment type="similarity">
    <text evidence="1">Belongs to the chorismate synthase family.</text>
</comment>
<comment type="sequence caution" evidence="2">
    <conflict type="erroneous initiation">
        <sequence resource="EMBL-CDS" id="ABB34080"/>
    </conflict>
    <text>Extended N-terminus.</text>
</comment>
<gene>
    <name evidence="1" type="primary">aroC</name>
    <name type="ordered locus">Syncc9605_0304</name>
</gene>
<sequence length="364" mass="38603">MGSSFGDLFRISTFGESHGGGVGVIVEGCPPRLNLSVESIQAELDRRKPGQSHITTPRKEADQVQVLSGLLDGETTLGTPIAMVVRNKDQRPGDYKDMAVAFRPSHADATYQAKYGIQARSGGGRASARETIGRVAAGAIAKQLLKQAAGTEILAWVKRIHNIEASGIDPQRVQLSDVEANIVRCPESAVAERMVERIEAIGREGDSCGGVIECVVRHPAVGLGMPVFDKLEADLAKAVMSLPATKGFEIGSGFDGTLLKGSEHNDAFLPSDDGRLKTATNNSGGIQGGISNGEPIVIRVAFKPTATIRKEQQTIDSDGKATTLAGKGRHDPCVLPRAVPMVEAMVALVLADHLLRQQGQCSLW</sequence>
<name>AROC_SYNSC</name>
<reference key="1">
    <citation type="submission" date="2005-07" db="EMBL/GenBank/DDBJ databases">
        <title>Complete sequence of Synechococcus sp. CC9605.</title>
        <authorList>
            <consortium name="US DOE Joint Genome Institute"/>
            <person name="Copeland A."/>
            <person name="Lucas S."/>
            <person name="Lapidus A."/>
            <person name="Barry K."/>
            <person name="Detter J.C."/>
            <person name="Glavina T."/>
            <person name="Hammon N."/>
            <person name="Israni S."/>
            <person name="Pitluck S."/>
            <person name="Schmutz J."/>
            <person name="Martinez M."/>
            <person name="Larimer F."/>
            <person name="Land M."/>
            <person name="Kyrpides N."/>
            <person name="Ivanova N."/>
            <person name="Richardson P."/>
        </authorList>
    </citation>
    <scope>NUCLEOTIDE SEQUENCE [LARGE SCALE GENOMIC DNA]</scope>
    <source>
        <strain>CC9605</strain>
    </source>
</reference>
<organism>
    <name type="scientific">Synechococcus sp. (strain CC9605)</name>
    <dbReference type="NCBI Taxonomy" id="110662"/>
    <lineage>
        <taxon>Bacteria</taxon>
        <taxon>Bacillati</taxon>
        <taxon>Cyanobacteriota</taxon>
        <taxon>Cyanophyceae</taxon>
        <taxon>Synechococcales</taxon>
        <taxon>Synechococcaceae</taxon>
        <taxon>Synechococcus</taxon>
    </lineage>
</organism>
<dbReference type="EC" id="4.2.3.5" evidence="1"/>
<dbReference type="EMBL" id="CP000110">
    <property type="protein sequence ID" value="ABB34080.1"/>
    <property type="status" value="ALT_INIT"/>
    <property type="molecule type" value="Genomic_DNA"/>
</dbReference>
<dbReference type="RefSeq" id="WP_041435385.1">
    <property type="nucleotide sequence ID" value="NC_007516.1"/>
</dbReference>
<dbReference type="SMR" id="Q3AMV2"/>
<dbReference type="STRING" id="110662.Syncc9605_0304"/>
<dbReference type="KEGG" id="syd:Syncc9605_0304"/>
<dbReference type="eggNOG" id="COG0082">
    <property type="taxonomic scope" value="Bacteria"/>
</dbReference>
<dbReference type="HOGENOM" id="CLU_034547_0_1_3"/>
<dbReference type="OrthoDB" id="9771806at2"/>
<dbReference type="UniPathway" id="UPA00053">
    <property type="reaction ID" value="UER00090"/>
</dbReference>
<dbReference type="GO" id="GO:0005829">
    <property type="term" value="C:cytosol"/>
    <property type="evidence" value="ECO:0007669"/>
    <property type="project" value="TreeGrafter"/>
</dbReference>
<dbReference type="GO" id="GO:0004107">
    <property type="term" value="F:chorismate synthase activity"/>
    <property type="evidence" value="ECO:0007669"/>
    <property type="project" value="UniProtKB-UniRule"/>
</dbReference>
<dbReference type="GO" id="GO:0010181">
    <property type="term" value="F:FMN binding"/>
    <property type="evidence" value="ECO:0007669"/>
    <property type="project" value="TreeGrafter"/>
</dbReference>
<dbReference type="GO" id="GO:0008652">
    <property type="term" value="P:amino acid biosynthetic process"/>
    <property type="evidence" value="ECO:0007669"/>
    <property type="project" value="UniProtKB-KW"/>
</dbReference>
<dbReference type="GO" id="GO:0009073">
    <property type="term" value="P:aromatic amino acid family biosynthetic process"/>
    <property type="evidence" value="ECO:0007669"/>
    <property type="project" value="UniProtKB-KW"/>
</dbReference>
<dbReference type="GO" id="GO:0009423">
    <property type="term" value="P:chorismate biosynthetic process"/>
    <property type="evidence" value="ECO:0007669"/>
    <property type="project" value="UniProtKB-UniRule"/>
</dbReference>
<dbReference type="CDD" id="cd07304">
    <property type="entry name" value="Chorismate_synthase"/>
    <property type="match status" value="1"/>
</dbReference>
<dbReference type="FunFam" id="3.60.150.10:FF:000003">
    <property type="entry name" value="Chorismate synthase"/>
    <property type="match status" value="1"/>
</dbReference>
<dbReference type="Gene3D" id="3.60.150.10">
    <property type="entry name" value="Chorismate synthase AroC"/>
    <property type="match status" value="1"/>
</dbReference>
<dbReference type="HAMAP" id="MF_00300">
    <property type="entry name" value="Chorismate_synth"/>
    <property type="match status" value="1"/>
</dbReference>
<dbReference type="InterPro" id="IPR000453">
    <property type="entry name" value="Chorismate_synth"/>
</dbReference>
<dbReference type="InterPro" id="IPR035904">
    <property type="entry name" value="Chorismate_synth_AroC_sf"/>
</dbReference>
<dbReference type="InterPro" id="IPR020541">
    <property type="entry name" value="Chorismate_synthase_CS"/>
</dbReference>
<dbReference type="NCBIfam" id="TIGR00033">
    <property type="entry name" value="aroC"/>
    <property type="match status" value="1"/>
</dbReference>
<dbReference type="NCBIfam" id="NF003793">
    <property type="entry name" value="PRK05382.1"/>
    <property type="match status" value="1"/>
</dbReference>
<dbReference type="PANTHER" id="PTHR21085">
    <property type="entry name" value="CHORISMATE SYNTHASE"/>
    <property type="match status" value="1"/>
</dbReference>
<dbReference type="PANTHER" id="PTHR21085:SF0">
    <property type="entry name" value="CHORISMATE SYNTHASE"/>
    <property type="match status" value="1"/>
</dbReference>
<dbReference type="Pfam" id="PF01264">
    <property type="entry name" value="Chorismate_synt"/>
    <property type="match status" value="1"/>
</dbReference>
<dbReference type="PIRSF" id="PIRSF001456">
    <property type="entry name" value="Chorismate_synth"/>
    <property type="match status" value="1"/>
</dbReference>
<dbReference type="SUPFAM" id="SSF103263">
    <property type="entry name" value="Chorismate synthase, AroC"/>
    <property type="match status" value="1"/>
</dbReference>
<dbReference type="PROSITE" id="PS00787">
    <property type="entry name" value="CHORISMATE_SYNTHASE_1"/>
    <property type="match status" value="1"/>
</dbReference>
<dbReference type="PROSITE" id="PS00788">
    <property type="entry name" value="CHORISMATE_SYNTHASE_2"/>
    <property type="match status" value="1"/>
</dbReference>
<dbReference type="PROSITE" id="PS00789">
    <property type="entry name" value="CHORISMATE_SYNTHASE_3"/>
    <property type="match status" value="1"/>
</dbReference>
<accession>Q3AMV2</accession>
<proteinExistence type="inferred from homology"/>
<evidence type="ECO:0000255" key="1">
    <source>
        <dbReference type="HAMAP-Rule" id="MF_00300"/>
    </source>
</evidence>
<evidence type="ECO:0000305" key="2"/>
<keyword id="KW-0028">Amino-acid biosynthesis</keyword>
<keyword id="KW-0057">Aromatic amino acid biosynthesis</keyword>
<keyword id="KW-0274">FAD</keyword>
<keyword id="KW-0285">Flavoprotein</keyword>
<keyword id="KW-0288">FMN</keyword>
<keyword id="KW-0456">Lyase</keyword>
<keyword id="KW-0521">NADP</keyword>
<protein>
    <recommendedName>
        <fullName evidence="1">Chorismate synthase</fullName>
        <shortName evidence="1">CS</shortName>
        <ecNumber evidence="1">4.2.3.5</ecNumber>
    </recommendedName>
    <alternativeName>
        <fullName evidence="1">5-enolpyruvylshikimate-3-phosphate phospholyase</fullName>
    </alternativeName>
</protein>
<feature type="chain" id="PRO_0000256355" description="Chorismate synthase">
    <location>
        <begin position="1"/>
        <end position="364"/>
    </location>
</feature>
<feature type="binding site" evidence="1">
    <location>
        <position position="47"/>
    </location>
    <ligand>
        <name>NADP(+)</name>
        <dbReference type="ChEBI" id="CHEBI:58349"/>
    </ligand>
</feature>
<feature type="binding site" evidence="1">
    <location>
        <begin position="125"/>
        <end position="127"/>
    </location>
    <ligand>
        <name>FMN</name>
        <dbReference type="ChEBI" id="CHEBI:58210"/>
    </ligand>
</feature>
<feature type="binding site" evidence="1">
    <location>
        <position position="288"/>
    </location>
    <ligand>
        <name>FMN</name>
        <dbReference type="ChEBI" id="CHEBI:58210"/>
    </ligand>
</feature>
<feature type="binding site" evidence="1">
    <location>
        <begin position="303"/>
        <end position="307"/>
    </location>
    <ligand>
        <name>FMN</name>
        <dbReference type="ChEBI" id="CHEBI:58210"/>
    </ligand>
</feature>
<feature type="binding site" evidence="1">
    <location>
        <position position="329"/>
    </location>
    <ligand>
        <name>FMN</name>
        <dbReference type="ChEBI" id="CHEBI:58210"/>
    </ligand>
</feature>